<protein>
    <recommendedName>
        <fullName evidence="1">Pantothenate synthetase</fullName>
        <shortName evidence="1">PS</shortName>
        <ecNumber evidence="1">6.3.2.1</ecNumber>
    </recommendedName>
    <alternativeName>
        <fullName evidence="1">Pantoate--beta-alanine ligase</fullName>
    </alternativeName>
    <alternativeName>
        <fullName evidence="1">Pantoate-activating enzyme</fullName>
    </alternativeName>
</protein>
<evidence type="ECO:0000255" key="1">
    <source>
        <dbReference type="HAMAP-Rule" id="MF_00158"/>
    </source>
</evidence>
<gene>
    <name evidence="1" type="primary">panC</name>
    <name type="ordered locus">mll0196</name>
</gene>
<accession>Q98ND0</accession>
<proteinExistence type="inferred from homology"/>
<keyword id="KW-0067">ATP-binding</keyword>
<keyword id="KW-0963">Cytoplasm</keyword>
<keyword id="KW-0436">Ligase</keyword>
<keyword id="KW-0547">Nucleotide-binding</keyword>
<keyword id="KW-0566">Pantothenate biosynthesis</keyword>
<reference key="1">
    <citation type="journal article" date="2000" name="DNA Res.">
        <title>Complete genome structure of the nitrogen-fixing symbiotic bacterium Mesorhizobium loti.</title>
        <authorList>
            <person name="Kaneko T."/>
            <person name="Nakamura Y."/>
            <person name="Sato S."/>
            <person name="Asamizu E."/>
            <person name="Kato T."/>
            <person name="Sasamoto S."/>
            <person name="Watanabe A."/>
            <person name="Idesawa K."/>
            <person name="Ishikawa A."/>
            <person name="Kawashima K."/>
            <person name="Kimura T."/>
            <person name="Kishida Y."/>
            <person name="Kiyokawa C."/>
            <person name="Kohara M."/>
            <person name="Matsumoto M."/>
            <person name="Matsuno A."/>
            <person name="Mochizuki Y."/>
            <person name="Nakayama S."/>
            <person name="Nakazaki N."/>
            <person name="Shimpo S."/>
            <person name="Sugimoto M."/>
            <person name="Takeuchi C."/>
            <person name="Yamada M."/>
            <person name="Tabata S."/>
        </authorList>
    </citation>
    <scope>NUCLEOTIDE SEQUENCE [LARGE SCALE GENOMIC DNA]</scope>
    <source>
        <strain>LMG 29417 / CECT 9101 / MAFF 303099</strain>
    </source>
</reference>
<comment type="function">
    <text evidence="1">Catalyzes the condensation of pantoate with beta-alanine in an ATP-dependent reaction via a pantoyl-adenylate intermediate.</text>
</comment>
<comment type="catalytic activity">
    <reaction evidence="1">
        <text>(R)-pantoate + beta-alanine + ATP = (R)-pantothenate + AMP + diphosphate + H(+)</text>
        <dbReference type="Rhea" id="RHEA:10912"/>
        <dbReference type="ChEBI" id="CHEBI:15378"/>
        <dbReference type="ChEBI" id="CHEBI:15980"/>
        <dbReference type="ChEBI" id="CHEBI:29032"/>
        <dbReference type="ChEBI" id="CHEBI:30616"/>
        <dbReference type="ChEBI" id="CHEBI:33019"/>
        <dbReference type="ChEBI" id="CHEBI:57966"/>
        <dbReference type="ChEBI" id="CHEBI:456215"/>
        <dbReference type="EC" id="6.3.2.1"/>
    </reaction>
</comment>
<comment type="pathway">
    <text evidence="1">Cofactor biosynthesis; (R)-pantothenate biosynthesis; (R)-pantothenate from (R)-pantoate and beta-alanine: step 1/1.</text>
</comment>
<comment type="subunit">
    <text evidence="1">Homodimer.</text>
</comment>
<comment type="subcellular location">
    <subcellularLocation>
        <location evidence="1">Cytoplasm</location>
    </subcellularLocation>
</comment>
<comment type="miscellaneous">
    <text evidence="1">The reaction proceeds by a bi uni uni bi ping pong mechanism.</text>
</comment>
<comment type="similarity">
    <text evidence="1">Belongs to the pantothenate synthetase family.</text>
</comment>
<sequence length="283" mass="30756">MSRPEVVNSVAALRAQVSDWRRDGLRVAMVPTMGALHEGHLSLIRIAREKAERCVVSIFVNPTQFAPSEDLDKYPRQLARDLDLLARVKADLAFTPTVGAMYPAGFATRISVGGPSAGLESDFRPTFFEGVATVVAKLFLQATPDCAVFGEKDYQQLCVVRQLCRDLDLPVEIIGAPTIRDAHGLAMSSRNAYLDEAELAVARRLNVILHKAAAALAAGTHQDDATGEANRALIAAGFQKIDYVEARESLTLAPWRRDRAGRVLAAAWLGKTRLIDNVDVPVA</sequence>
<feature type="chain" id="PRO_0000128261" description="Pantothenate synthetase">
    <location>
        <begin position="1"/>
        <end position="283"/>
    </location>
</feature>
<feature type="active site" description="Proton donor" evidence="1">
    <location>
        <position position="40"/>
    </location>
</feature>
<feature type="binding site" evidence="1">
    <location>
        <begin position="33"/>
        <end position="40"/>
    </location>
    <ligand>
        <name>ATP</name>
        <dbReference type="ChEBI" id="CHEBI:30616"/>
    </ligand>
</feature>
<feature type="binding site" evidence="1">
    <location>
        <position position="64"/>
    </location>
    <ligand>
        <name>(R)-pantoate</name>
        <dbReference type="ChEBI" id="CHEBI:15980"/>
    </ligand>
</feature>
<feature type="binding site" evidence="1">
    <location>
        <position position="64"/>
    </location>
    <ligand>
        <name>beta-alanine</name>
        <dbReference type="ChEBI" id="CHEBI:57966"/>
    </ligand>
</feature>
<feature type="binding site" evidence="1">
    <location>
        <begin position="150"/>
        <end position="153"/>
    </location>
    <ligand>
        <name>ATP</name>
        <dbReference type="ChEBI" id="CHEBI:30616"/>
    </ligand>
</feature>
<feature type="binding site" evidence="1">
    <location>
        <position position="156"/>
    </location>
    <ligand>
        <name>(R)-pantoate</name>
        <dbReference type="ChEBI" id="CHEBI:15980"/>
    </ligand>
</feature>
<feature type="binding site" evidence="1">
    <location>
        <position position="179"/>
    </location>
    <ligand>
        <name>ATP</name>
        <dbReference type="ChEBI" id="CHEBI:30616"/>
    </ligand>
</feature>
<feature type="binding site" evidence="1">
    <location>
        <begin position="187"/>
        <end position="190"/>
    </location>
    <ligand>
        <name>ATP</name>
        <dbReference type="ChEBI" id="CHEBI:30616"/>
    </ligand>
</feature>
<dbReference type="EC" id="6.3.2.1" evidence="1"/>
<dbReference type="EMBL" id="BA000012">
    <property type="protein sequence ID" value="BAB47831.1"/>
    <property type="molecule type" value="Genomic_DNA"/>
</dbReference>
<dbReference type="RefSeq" id="WP_010909201.1">
    <property type="nucleotide sequence ID" value="NC_002678.2"/>
</dbReference>
<dbReference type="SMR" id="Q98ND0"/>
<dbReference type="KEGG" id="mlo:mll0196"/>
<dbReference type="PATRIC" id="fig|266835.9.peg.152"/>
<dbReference type="eggNOG" id="COG0414">
    <property type="taxonomic scope" value="Bacteria"/>
</dbReference>
<dbReference type="HOGENOM" id="CLU_047148_0_0_5"/>
<dbReference type="UniPathway" id="UPA00028">
    <property type="reaction ID" value="UER00005"/>
</dbReference>
<dbReference type="Proteomes" id="UP000000552">
    <property type="component" value="Chromosome"/>
</dbReference>
<dbReference type="GO" id="GO:0005829">
    <property type="term" value="C:cytosol"/>
    <property type="evidence" value="ECO:0007669"/>
    <property type="project" value="TreeGrafter"/>
</dbReference>
<dbReference type="GO" id="GO:0005524">
    <property type="term" value="F:ATP binding"/>
    <property type="evidence" value="ECO:0007669"/>
    <property type="project" value="UniProtKB-KW"/>
</dbReference>
<dbReference type="GO" id="GO:0004592">
    <property type="term" value="F:pantoate-beta-alanine ligase activity"/>
    <property type="evidence" value="ECO:0007669"/>
    <property type="project" value="UniProtKB-UniRule"/>
</dbReference>
<dbReference type="GO" id="GO:0015940">
    <property type="term" value="P:pantothenate biosynthetic process"/>
    <property type="evidence" value="ECO:0007669"/>
    <property type="project" value="UniProtKB-UniRule"/>
</dbReference>
<dbReference type="CDD" id="cd00560">
    <property type="entry name" value="PanC"/>
    <property type="match status" value="1"/>
</dbReference>
<dbReference type="FunFam" id="3.40.50.620:FF:000114">
    <property type="entry name" value="Pantothenate synthetase"/>
    <property type="match status" value="1"/>
</dbReference>
<dbReference type="Gene3D" id="3.40.50.620">
    <property type="entry name" value="HUPs"/>
    <property type="match status" value="1"/>
</dbReference>
<dbReference type="Gene3D" id="3.30.1300.10">
    <property type="entry name" value="Pantoate-beta-alanine ligase, C-terminal domain"/>
    <property type="match status" value="1"/>
</dbReference>
<dbReference type="HAMAP" id="MF_00158">
    <property type="entry name" value="PanC"/>
    <property type="match status" value="1"/>
</dbReference>
<dbReference type="InterPro" id="IPR004821">
    <property type="entry name" value="Cyt_trans-like"/>
</dbReference>
<dbReference type="InterPro" id="IPR003721">
    <property type="entry name" value="Pantoate_ligase"/>
</dbReference>
<dbReference type="InterPro" id="IPR042176">
    <property type="entry name" value="Pantoate_ligase_C"/>
</dbReference>
<dbReference type="InterPro" id="IPR014729">
    <property type="entry name" value="Rossmann-like_a/b/a_fold"/>
</dbReference>
<dbReference type="NCBIfam" id="TIGR00125">
    <property type="entry name" value="cyt_tran_rel"/>
    <property type="match status" value="1"/>
</dbReference>
<dbReference type="NCBIfam" id="TIGR00018">
    <property type="entry name" value="panC"/>
    <property type="match status" value="1"/>
</dbReference>
<dbReference type="PANTHER" id="PTHR21299">
    <property type="entry name" value="CYTIDYLATE KINASE/PANTOATE-BETA-ALANINE LIGASE"/>
    <property type="match status" value="1"/>
</dbReference>
<dbReference type="PANTHER" id="PTHR21299:SF1">
    <property type="entry name" value="PANTOATE--BETA-ALANINE LIGASE"/>
    <property type="match status" value="1"/>
</dbReference>
<dbReference type="Pfam" id="PF02569">
    <property type="entry name" value="Pantoate_ligase"/>
    <property type="match status" value="1"/>
</dbReference>
<dbReference type="SUPFAM" id="SSF52374">
    <property type="entry name" value="Nucleotidylyl transferase"/>
    <property type="match status" value="1"/>
</dbReference>
<name>PANC_RHILO</name>
<organism>
    <name type="scientific">Mesorhizobium japonicum (strain LMG 29417 / CECT 9101 / MAFF 303099)</name>
    <name type="common">Mesorhizobium loti (strain MAFF 303099)</name>
    <dbReference type="NCBI Taxonomy" id="266835"/>
    <lineage>
        <taxon>Bacteria</taxon>
        <taxon>Pseudomonadati</taxon>
        <taxon>Pseudomonadota</taxon>
        <taxon>Alphaproteobacteria</taxon>
        <taxon>Hyphomicrobiales</taxon>
        <taxon>Phyllobacteriaceae</taxon>
        <taxon>Mesorhizobium</taxon>
    </lineage>
</organism>